<feature type="chain" id="PRO_0000318451" description="Protein translocase subunit SecA">
    <location>
        <begin position="1"/>
        <end position="839"/>
    </location>
</feature>
<feature type="region of interest" description="Disordered" evidence="2">
    <location>
        <begin position="780"/>
        <end position="839"/>
    </location>
</feature>
<feature type="compositionally biased region" description="Basic and acidic residues" evidence="2">
    <location>
        <begin position="780"/>
        <end position="790"/>
    </location>
</feature>
<feature type="compositionally biased region" description="Polar residues" evidence="2">
    <location>
        <begin position="791"/>
        <end position="809"/>
    </location>
</feature>
<feature type="compositionally biased region" description="Basic residues" evidence="2">
    <location>
        <begin position="827"/>
        <end position="839"/>
    </location>
</feature>
<feature type="binding site" evidence="1">
    <location>
        <position position="85"/>
    </location>
    <ligand>
        <name>ATP</name>
        <dbReference type="ChEBI" id="CHEBI:30616"/>
    </ligand>
</feature>
<feature type="binding site" evidence="1">
    <location>
        <begin position="103"/>
        <end position="107"/>
    </location>
    <ligand>
        <name>ATP</name>
        <dbReference type="ChEBI" id="CHEBI:30616"/>
    </ligand>
</feature>
<feature type="binding site" evidence="1">
    <location>
        <position position="493"/>
    </location>
    <ligand>
        <name>ATP</name>
        <dbReference type="ChEBI" id="CHEBI:30616"/>
    </ligand>
</feature>
<feature type="binding site" evidence="1">
    <location>
        <position position="821"/>
    </location>
    <ligand>
        <name>Zn(2+)</name>
        <dbReference type="ChEBI" id="CHEBI:29105"/>
    </ligand>
</feature>
<feature type="binding site" evidence="1">
    <location>
        <position position="823"/>
    </location>
    <ligand>
        <name>Zn(2+)</name>
        <dbReference type="ChEBI" id="CHEBI:29105"/>
    </ligand>
</feature>
<feature type="binding site" evidence="1">
    <location>
        <position position="832"/>
    </location>
    <ligand>
        <name>Zn(2+)</name>
        <dbReference type="ChEBI" id="CHEBI:29105"/>
    </ligand>
</feature>
<feature type="binding site" evidence="1">
    <location>
        <position position="833"/>
    </location>
    <ligand>
        <name>Zn(2+)</name>
        <dbReference type="ChEBI" id="CHEBI:29105"/>
    </ligand>
</feature>
<protein>
    <recommendedName>
        <fullName evidence="1">Protein translocase subunit SecA</fullName>
        <ecNumber evidence="1">7.4.2.8</ecNumber>
    </recommendedName>
</protein>
<keyword id="KW-0067">ATP-binding</keyword>
<keyword id="KW-1003">Cell membrane</keyword>
<keyword id="KW-0963">Cytoplasm</keyword>
<keyword id="KW-0472">Membrane</keyword>
<keyword id="KW-0479">Metal-binding</keyword>
<keyword id="KW-0547">Nucleotide-binding</keyword>
<keyword id="KW-0653">Protein transport</keyword>
<keyword id="KW-1278">Translocase</keyword>
<keyword id="KW-0811">Translocation</keyword>
<keyword id="KW-0813">Transport</keyword>
<keyword id="KW-0862">Zinc</keyword>
<organism>
    <name type="scientific">Streptococcus pyogenes serotype M28 (strain MGAS6180)</name>
    <dbReference type="NCBI Taxonomy" id="319701"/>
    <lineage>
        <taxon>Bacteria</taxon>
        <taxon>Bacillati</taxon>
        <taxon>Bacillota</taxon>
        <taxon>Bacilli</taxon>
        <taxon>Lactobacillales</taxon>
        <taxon>Streptococcaceae</taxon>
        <taxon>Streptococcus</taxon>
    </lineage>
</organism>
<comment type="function">
    <text evidence="1">Part of the Sec protein translocase complex. Interacts with the SecYEG preprotein conducting channel. Has a central role in coupling the hydrolysis of ATP to the transfer of proteins into and across the cell membrane, serving as an ATP-driven molecular motor driving the stepwise translocation of polypeptide chains across the membrane.</text>
</comment>
<comment type="catalytic activity">
    <reaction evidence="1">
        <text>ATP + H2O + cellular proteinSide 1 = ADP + phosphate + cellular proteinSide 2.</text>
        <dbReference type="EC" id="7.4.2.8"/>
    </reaction>
</comment>
<comment type="cofactor">
    <cofactor evidence="1">
        <name>Zn(2+)</name>
        <dbReference type="ChEBI" id="CHEBI:29105"/>
    </cofactor>
    <text evidence="1">May bind 1 zinc ion per subunit.</text>
</comment>
<comment type="subunit">
    <text evidence="1">Monomer and homodimer. Part of the essential Sec protein translocation apparatus which comprises SecA, SecYEG and auxiliary proteins SecDF. Other proteins may also be involved.</text>
</comment>
<comment type="subcellular location">
    <subcellularLocation>
        <location evidence="1">Cell membrane</location>
        <topology evidence="1">Peripheral membrane protein</topology>
        <orientation evidence="1">Cytoplasmic side</orientation>
    </subcellularLocation>
    <subcellularLocation>
        <location evidence="1">Cytoplasm</location>
    </subcellularLocation>
    <text evidence="1">Distribution is 50-50.</text>
</comment>
<comment type="similarity">
    <text evidence="1">Belongs to the SecA family.</text>
</comment>
<evidence type="ECO:0000255" key="1">
    <source>
        <dbReference type="HAMAP-Rule" id="MF_01382"/>
    </source>
</evidence>
<evidence type="ECO:0000256" key="2">
    <source>
        <dbReference type="SAM" id="MobiDB-lite"/>
    </source>
</evidence>
<dbReference type="EC" id="7.4.2.8" evidence="1"/>
<dbReference type="EMBL" id="CP000056">
    <property type="protein sequence ID" value="AAX72634.1"/>
    <property type="molecule type" value="Genomic_DNA"/>
</dbReference>
<dbReference type="RefSeq" id="WP_011285114.1">
    <property type="nucleotide sequence ID" value="NC_007296.2"/>
</dbReference>
<dbReference type="SMR" id="Q48RM6"/>
<dbReference type="KEGG" id="spb:M28_Spy1524"/>
<dbReference type="HOGENOM" id="CLU_005314_3_0_9"/>
<dbReference type="GO" id="GO:0031522">
    <property type="term" value="C:cell envelope Sec protein transport complex"/>
    <property type="evidence" value="ECO:0007669"/>
    <property type="project" value="TreeGrafter"/>
</dbReference>
<dbReference type="GO" id="GO:0005829">
    <property type="term" value="C:cytosol"/>
    <property type="evidence" value="ECO:0007669"/>
    <property type="project" value="TreeGrafter"/>
</dbReference>
<dbReference type="GO" id="GO:0005886">
    <property type="term" value="C:plasma membrane"/>
    <property type="evidence" value="ECO:0007669"/>
    <property type="project" value="UniProtKB-SubCell"/>
</dbReference>
<dbReference type="GO" id="GO:0005524">
    <property type="term" value="F:ATP binding"/>
    <property type="evidence" value="ECO:0007669"/>
    <property type="project" value="UniProtKB-UniRule"/>
</dbReference>
<dbReference type="GO" id="GO:0046872">
    <property type="term" value="F:metal ion binding"/>
    <property type="evidence" value="ECO:0007669"/>
    <property type="project" value="UniProtKB-KW"/>
</dbReference>
<dbReference type="GO" id="GO:0008564">
    <property type="term" value="F:protein-exporting ATPase activity"/>
    <property type="evidence" value="ECO:0007669"/>
    <property type="project" value="UniProtKB-EC"/>
</dbReference>
<dbReference type="GO" id="GO:0065002">
    <property type="term" value="P:intracellular protein transmembrane transport"/>
    <property type="evidence" value="ECO:0007669"/>
    <property type="project" value="UniProtKB-UniRule"/>
</dbReference>
<dbReference type="GO" id="GO:0017038">
    <property type="term" value="P:protein import"/>
    <property type="evidence" value="ECO:0007669"/>
    <property type="project" value="InterPro"/>
</dbReference>
<dbReference type="GO" id="GO:0006605">
    <property type="term" value="P:protein targeting"/>
    <property type="evidence" value="ECO:0007669"/>
    <property type="project" value="UniProtKB-UniRule"/>
</dbReference>
<dbReference type="GO" id="GO:0043952">
    <property type="term" value="P:protein transport by the Sec complex"/>
    <property type="evidence" value="ECO:0007669"/>
    <property type="project" value="TreeGrafter"/>
</dbReference>
<dbReference type="CDD" id="cd17928">
    <property type="entry name" value="DEXDc_SecA"/>
    <property type="match status" value="1"/>
</dbReference>
<dbReference type="CDD" id="cd18803">
    <property type="entry name" value="SF2_C_secA"/>
    <property type="match status" value="1"/>
</dbReference>
<dbReference type="FunFam" id="1.10.3060.10:FF:000002">
    <property type="entry name" value="Preprotein translocase subunit SecA"/>
    <property type="match status" value="1"/>
</dbReference>
<dbReference type="FunFam" id="3.40.50.300:FF:000429">
    <property type="entry name" value="Preprotein translocase subunit SecA"/>
    <property type="match status" value="1"/>
</dbReference>
<dbReference type="FunFam" id="3.90.1440.10:FF:000001">
    <property type="entry name" value="Preprotein translocase subunit SecA"/>
    <property type="match status" value="1"/>
</dbReference>
<dbReference type="Gene3D" id="1.10.3060.10">
    <property type="entry name" value="Helical scaffold and wing domains of SecA"/>
    <property type="match status" value="1"/>
</dbReference>
<dbReference type="Gene3D" id="3.40.50.300">
    <property type="entry name" value="P-loop containing nucleotide triphosphate hydrolases"/>
    <property type="match status" value="3"/>
</dbReference>
<dbReference type="Gene3D" id="3.90.1440.10">
    <property type="entry name" value="SecA, preprotein cross-linking domain"/>
    <property type="match status" value="1"/>
</dbReference>
<dbReference type="HAMAP" id="MF_01382">
    <property type="entry name" value="SecA"/>
    <property type="match status" value="1"/>
</dbReference>
<dbReference type="InterPro" id="IPR014001">
    <property type="entry name" value="Helicase_ATP-bd"/>
</dbReference>
<dbReference type="InterPro" id="IPR001650">
    <property type="entry name" value="Helicase_C-like"/>
</dbReference>
<dbReference type="InterPro" id="IPR027417">
    <property type="entry name" value="P-loop_NTPase"/>
</dbReference>
<dbReference type="InterPro" id="IPR004027">
    <property type="entry name" value="SEC_C_motif"/>
</dbReference>
<dbReference type="InterPro" id="IPR000185">
    <property type="entry name" value="SecA"/>
</dbReference>
<dbReference type="InterPro" id="IPR020937">
    <property type="entry name" value="SecA_CS"/>
</dbReference>
<dbReference type="InterPro" id="IPR011115">
    <property type="entry name" value="SecA_DEAD"/>
</dbReference>
<dbReference type="InterPro" id="IPR014018">
    <property type="entry name" value="SecA_motor_DEAD"/>
</dbReference>
<dbReference type="InterPro" id="IPR011130">
    <property type="entry name" value="SecA_preprotein_X-link_dom"/>
</dbReference>
<dbReference type="InterPro" id="IPR044722">
    <property type="entry name" value="SecA_SF2_C"/>
</dbReference>
<dbReference type="InterPro" id="IPR011116">
    <property type="entry name" value="SecA_Wing/Scaffold"/>
</dbReference>
<dbReference type="InterPro" id="IPR036266">
    <property type="entry name" value="SecA_Wing/Scaffold_sf"/>
</dbReference>
<dbReference type="InterPro" id="IPR036670">
    <property type="entry name" value="SecA_X-link_sf"/>
</dbReference>
<dbReference type="NCBIfam" id="NF006630">
    <property type="entry name" value="PRK09200.1"/>
    <property type="match status" value="1"/>
</dbReference>
<dbReference type="NCBIfam" id="TIGR00963">
    <property type="entry name" value="secA"/>
    <property type="match status" value="1"/>
</dbReference>
<dbReference type="PANTHER" id="PTHR30612:SF0">
    <property type="entry name" value="CHLOROPLAST PROTEIN-TRANSPORTING ATPASE"/>
    <property type="match status" value="1"/>
</dbReference>
<dbReference type="PANTHER" id="PTHR30612">
    <property type="entry name" value="SECA INNER MEMBRANE COMPONENT OF SEC PROTEIN SECRETION SYSTEM"/>
    <property type="match status" value="1"/>
</dbReference>
<dbReference type="Pfam" id="PF21090">
    <property type="entry name" value="P-loop_SecA"/>
    <property type="match status" value="2"/>
</dbReference>
<dbReference type="Pfam" id="PF02810">
    <property type="entry name" value="SEC-C"/>
    <property type="match status" value="1"/>
</dbReference>
<dbReference type="Pfam" id="PF07517">
    <property type="entry name" value="SecA_DEAD"/>
    <property type="match status" value="1"/>
</dbReference>
<dbReference type="Pfam" id="PF01043">
    <property type="entry name" value="SecA_PP_bind"/>
    <property type="match status" value="1"/>
</dbReference>
<dbReference type="Pfam" id="PF07516">
    <property type="entry name" value="SecA_SW"/>
    <property type="match status" value="1"/>
</dbReference>
<dbReference type="PRINTS" id="PR00906">
    <property type="entry name" value="SECA"/>
</dbReference>
<dbReference type="SMART" id="SM00957">
    <property type="entry name" value="SecA_DEAD"/>
    <property type="match status" value="1"/>
</dbReference>
<dbReference type="SMART" id="SM00958">
    <property type="entry name" value="SecA_PP_bind"/>
    <property type="match status" value="1"/>
</dbReference>
<dbReference type="SUPFAM" id="SSF81886">
    <property type="entry name" value="Helical scaffold and wing domains of SecA"/>
    <property type="match status" value="1"/>
</dbReference>
<dbReference type="SUPFAM" id="SSF52540">
    <property type="entry name" value="P-loop containing nucleoside triphosphate hydrolases"/>
    <property type="match status" value="2"/>
</dbReference>
<dbReference type="SUPFAM" id="SSF81767">
    <property type="entry name" value="Pre-protein crosslinking domain of SecA"/>
    <property type="match status" value="1"/>
</dbReference>
<dbReference type="PROSITE" id="PS01312">
    <property type="entry name" value="SECA"/>
    <property type="match status" value="1"/>
</dbReference>
<dbReference type="PROSITE" id="PS51196">
    <property type="entry name" value="SECA_MOTOR_DEAD"/>
    <property type="match status" value="1"/>
</dbReference>
<accession>Q48RM6</accession>
<proteinExistence type="inferred from homology"/>
<name>SECA_STRPM</name>
<reference key="1">
    <citation type="journal article" date="2005" name="J. Infect. Dis.">
        <title>Genome sequence of a serotype M28 strain of group A Streptococcus: potential new insights into puerperal sepsis and bacterial disease specificity.</title>
        <authorList>
            <person name="Green N.M."/>
            <person name="Zhang S."/>
            <person name="Porcella S.F."/>
            <person name="Nagiec M.J."/>
            <person name="Barbian K.D."/>
            <person name="Beres S.B."/>
            <person name="Lefebvre R.B."/>
            <person name="Musser J.M."/>
        </authorList>
    </citation>
    <scope>NUCLEOTIDE SEQUENCE [LARGE SCALE GENOMIC DNA]</scope>
    <source>
        <strain>MGAS6180</strain>
    </source>
</reference>
<sequence length="839" mass="94733">MANILRKVIENDKGELRKLEKIAKKVESYADQMVSLSDRDLQGKTLEFKERYQKGETLEQLLPEAFAVVREAAKRVLGLFPYRVQIMGGIVLHNGDVPEMRTGEGKTLTATMPVYLNAIAGEGVHVITVNEYLSTRDATEMGEVYSWLGLSVGINLAAKSPAEKREAYNCDITYSTNSEVGFDYLRDNMVVRQEDMVQRPLNFALVDEVDSVLIDEARTPLIVSGAVSSETNQLYIRADMFVKTLTSVDYVIDVPTKTIGLSDSGIDKAESYFNLSNLYDIENVALTHFIDNALRANYIMLLDIDYVVSEDGEILIVDQFTGRTMEGRRFSDGLHQAIEAKEGVRIQEESKTSASITYQNMFRMYKKLAGMTGTAKTEEEEFREVYNMRIIPIPTNRPIARIDHTDLLYPTLESKFRAVVEDVKTRHAKGQPILVGTVAVETSDLISRKLVEAGIPHEVLNAKNHFKEAQIIMNAGQRGAVTIATNMAGRGTDIKLGEGVRELGGLCVIGTERHESRRIDNQLRGRSGRQGDPGESQFYLSLEDDLMRRFGSDRIKAFLDRMKLDEEDTVIKSGMLGRQVESAQKRVEGNNYDTRKQVLQYDDVMREQREIIYANRRDVITANRDLGPEIKAMIKRTIDRAVDAHARSNRKDAIDAIVTFARTSLVPEESISAKELRGLKDDQIKEKLYQRALAIYDQQLSKLRDQEAIIEFQKVLILMIVDNKWTEHIDALDQLRNAVGLRGYAQNNPVVEYQAEGFKMFQDMIGAIEFDVTRTMMKAQIHEQERERASQRATTAAPQNIQSQQSANTDDLPKVERNEACPCGSGKKFKNCHGRKSFS</sequence>
<gene>
    <name evidence="1" type="primary">secA</name>
    <name type="ordered locus">M28_Spy1524</name>
</gene>